<sequence length="285" mass="31651">MDKIKVGLQYWIPQHALTRLVGKLASARAGSLTTAIIRWFIKQYNVNMDEALHSDPTHFKTFNEFFVRELKAGVRPIAEGEKVITHPADACVSQFGAIEYGKLIQAKGHTYSAQELLGGDAKLAEEFRDGDFATLYLSPRDYHRVHMPCDGTLRQMIYVPGDLFSVNPLTAENVPNLFARNERVVCIFDTEFGPMAQVLVGATIVGSIELVWAGTVTPPRGNTVYRWDYPANGNQAVVLKKGEEMGRFKLGSTVINLFAKQAIRFDDSMALGAPTRMGEPYAHQA</sequence>
<reference key="1">
    <citation type="submission" date="2007-03" db="EMBL/GenBank/DDBJ databases">
        <authorList>
            <person name="Heidelberg J."/>
        </authorList>
    </citation>
    <scope>NUCLEOTIDE SEQUENCE [LARGE SCALE GENOMIC DNA]</scope>
    <source>
        <strain>ATCC 39541 / Classical Ogawa 395 / O395</strain>
    </source>
</reference>
<reference key="2">
    <citation type="journal article" date="2008" name="PLoS ONE">
        <title>A recalibrated molecular clock and independent origins for the cholera pandemic clones.</title>
        <authorList>
            <person name="Feng L."/>
            <person name="Reeves P.R."/>
            <person name="Lan R."/>
            <person name="Ren Y."/>
            <person name="Gao C."/>
            <person name="Zhou Z."/>
            <person name="Ren Y."/>
            <person name="Cheng J."/>
            <person name="Wang W."/>
            <person name="Wang J."/>
            <person name="Qian W."/>
            <person name="Li D."/>
            <person name="Wang L."/>
        </authorList>
    </citation>
    <scope>NUCLEOTIDE SEQUENCE [LARGE SCALE GENOMIC DNA]</scope>
    <source>
        <strain>ATCC 39541 / Classical Ogawa 395 / O395</strain>
    </source>
</reference>
<accession>A5F3N7</accession>
<accession>C3M3Z7</accession>
<proteinExistence type="inferred from homology"/>
<keyword id="KW-1003">Cell membrane</keyword>
<keyword id="KW-0210">Decarboxylase</keyword>
<keyword id="KW-0444">Lipid biosynthesis</keyword>
<keyword id="KW-0443">Lipid metabolism</keyword>
<keyword id="KW-0456">Lyase</keyword>
<keyword id="KW-0472">Membrane</keyword>
<keyword id="KW-0594">Phospholipid biosynthesis</keyword>
<keyword id="KW-1208">Phospholipid metabolism</keyword>
<keyword id="KW-0670">Pyruvate</keyword>
<keyword id="KW-0865">Zymogen</keyword>
<dbReference type="EC" id="4.1.1.65" evidence="1"/>
<dbReference type="EMBL" id="CP000627">
    <property type="protein sequence ID" value="ABQ20926.1"/>
    <property type="molecule type" value="Genomic_DNA"/>
</dbReference>
<dbReference type="EMBL" id="CP001235">
    <property type="protein sequence ID" value="ACP08405.1"/>
    <property type="molecule type" value="Genomic_DNA"/>
</dbReference>
<dbReference type="SMR" id="A5F3N7"/>
<dbReference type="KEGG" id="vco:VC0395_A2741"/>
<dbReference type="KEGG" id="vcr:VC395_0382"/>
<dbReference type="PATRIC" id="fig|345073.21.peg.370"/>
<dbReference type="eggNOG" id="COG0688">
    <property type="taxonomic scope" value="Bacteria"/>
</dbReference>
<dbReference type="HOGENOM" id="CLU_029061_4_1_6"/>
<dbReference type="OrthoDB" id="9802030at2"/>
<dbReference type="UniPathway" id="UPA00558">
    <property type="reaction ID" value="UER00616"/>
</dbReference>
<dbReference type="Proteomes" id="UP000000249">
    <property type="component" value="Chromosome 2"/>
</dbReference>
<dbReference type="GO" id="GO:0005886">
    <property type="term" value="C:plasma membrane"/>
    <property type="evidence" value="ECO:0007669"/>
    <property type="project" value="UniProtKB-SubCell"/>
</dbReference>
<dbReference type="GO" id="GO:0004609">
    <property type="term" value="F:phosphatidylserine decarboxylase activity"/>
    <property type="evidence" value="ECO:0007669"/>
    <property type="project" value="UniProtKB-UniRule"/>
</dbReference>
<dbReference type="GO" id="GO:0006646">
    <property type="term" value="P:phosphatidylethanolamine biosynthetic process"/>
    <property type="evidence" value="ECO:0007669"/>
    <property type="project" value="UniProtKB-UniRule"/>
</dbReference>
<dbReference type="HAMAP" id="MF_00662">
    <property type="entry name" value="PS_decarb_PSD_B_type1"/>
    <property type="match status" value="1"/>
</dbReference>
<dbReference type="InterPro" id="IPR003817">
    <property type="entry name" value="PS_Dcarbxylase"/>
</dbReference>
<dbReference type="InterPro" id="IPR033177">
    <property type="entry name" value="PSD-B"/>
</dbReference>
<dbReference type="InterPro" id="IPR033178">
    <property type="entry name" value="PSD_type1_pro"/>
</dbReference>
<dbReference type="NCBIfam" id="TIGR00163">
    <property type="entry name" value="PS_decarb"/>
    <property type="match status" value="1"/>
</dbReference>
<dbReference type="PANTHER" id="PTHR10067">
    <property type="entry name" value="PHOSPHATIDYLSERINE DECARBOXYLASE"/>
    <property type="match status" value="1"/>
</dbReference>
<dbReference type="PANTHER" id="PTHR10067:SF6">
    <property type="entry name" value="PHOSPHATIDYLSERINE DECARBOXYLASE PROENZYME, MITOCHONDRIAL"/>
    <property type="match status" value="1"/>
</dbReference>
<dbReference type="Pfam" id="PF02666">
    <property type="entry name" value="PS_Dcarbxylase"/>
    <property type="match status" value="1"/>
</dbReference>
<organism>
    <name type="scientific">Vibrio cholerae serotype O1 (strain ATCC 39541 / Classical Ogawa 395 / O395)</name>
    <dbReference type="NCBI Taxonomy" id="345073"/>
    <lineage>
        <taxon>Bacteria</taxon>
        <taxon>Pseudomonadati</taxon>
        <taxon>Pseudomonadota</taxon>
        <taxon>Gammaproteobacteria</taxon>
        <taxon>Vibrionales</taxon>
        <taxon>Vibrionaceae</taxon>
        <taxon>Vibrio</taxon>
    </lineage>
</organism>
<name>PSD_VIBC3</name>
<feature type="chain" id="PRO_1000072712" description="Phosphatidylserine decarboxylase beta chain" evidence="1">
    <location>
        <begin position="1"/>
        <end position="251"/>
    </location>
</feature>
<feature type="chain" id="PRO_1000072713" description="Phosphatidylserine decarboxylase alpha chain" evidence="1">
    <location>
        <begin position="252"/>
        <end position="285"/>
    </location>
</feature>
<feature type="active site" description="Charge relay system; for autoendoproteolytic cleavage activity" evidence="1">
    <location>
        <position position="89"/>
    </location>
</feature>
<feature type="active site" description="Charge relay system; for autoendoproteolytic cleavage activity" evidence="1">
    <location>
        <position position="146"/>
    </location>
</feature>
<feature type="active site" description="Charge relay system; for autoendoproteolytic cleavage activity" evidence="1">
    <location>
        <position position="252"/>
    </location>
</feature>
<feature type="active site" description="Schiff-base intermediate with substrate; via pyruvic acid; for decarboxylase activity" evidence="1">
    <location>
        <position position="252"/>
    </location>
</feature>
<feature type="site" description="Cleavage (non-hydrolytic); by autocatalysis" evidence="1">
    <location>
        <begin position="251"/>
        <end position="252"/>
    </location>
</feature>
<feature type="modified residue" description="Pyruvic acid (Ser); by autocatalysis" evidence="1">
    <location>
        <position position="252"/>
    </location>
</feature>
<protein>
    <recommendedName>
        <fullName evidence="1">Phosphatidylserine decarboxylase proenzyme</fullName>
        <ecNumber evidence="1">4.1.1.65</ecNumber>
    </recommendedName>
    <component>
        <recommendedName>
            <fullName evidence="1">Phosphatidylserine decarboxylase alpha chain</fullName>
        </recommendedName>
    </component>
    <component>
        <recommendedName>
            <fullName evidence="1">Phosphatidylserine decarboxylase beta chain</fullName>
        </recommendedName>
    </component>
</protein>
<comment type="function">
    <text evidence="1">Catalyzes the formation of phosphatidylethanolamine (PtdEtn) from phosphatidylserine (PtdSer).</text>
</comment>
<comment type="catalytic activity">
    <reaction evidence="1">
        <text>a 1,2-diacyl-sn-glycero-3-phospho-L-serine + H(+) = a 1,2-diacyl-sn-glycero-3-phosphoethanolamine + CO2</text>
        <dbReference type="Rhea" id="RHEA:20828"/>
        <dbReference type="ChEBI" id="CHEBI:15378"/>
        <dbReference type="ChEBI" id="CHEBI:16526"/>
        <dbReference type="ChEBI" id="CHEBI:57262"/>
        <dbReference type="ChEBI" id="CHEBI:64612"/>
        <dbReference type="EC" id="4.1.1.65"/>
    </reaction>
</comment>
<comment type="cofactor">
    <cofactor evidence="1">
        <name>pyruvate</name>
        <dbReference type="ChEBI" id="CHEBI:15361"/>
    </cofactor>
    <text evidence="1">Binds 1 pyruvoyl group covalently per subunit.</text>
</comment>
<comment type="pathway">
    <text evidence="1">Phospholipid metabolism; phosphatidylethanolamine biosynthesis; phosphatidylethanolamine from CDP-diacylglycerol: step 2/2.</text>
</comment>
<comment type="subunit">
    <text evidence="1">Heterodimer of a large membrane-associated beta subunit and a small pyruvoyl-containing alpha subunit.</text>
</comment>
<comment type="subcellular location">
    <subcellularLocation>
        <location evidence="1">Cell membrane</location>
        <topology evidence="1">Peripheral membrane protein</topology>
    </subcellularLocation>
</comment>
<comment type="PTM">
    <text evidence="1">Is synthesized initially as an inactive proenzyme. Formation of the active enzyme involves a self-maturation process in which the active site pyruvoyl group is generated from an internal serine residue via an autocatalytic post-translational modification. Two non-identical subunits are generated from the proenzyme in this reaction, and the pyruvate is formed at the N-terminus of the alpha chain, which is derived from the carboxyl end of the proenzyme. The autoendoproteolytic cleavage occurs by a canonical serine protease mechanism, in which the side chain hydroxyl group of the serine supplies its oxygen atom to form the C-terminus of the beta chain, while the remainder of the serine residue undergoes an oxidative deamination to produce ammonia and the pyruvoyl prosthetic group on the alpha chain. During this reaction, the Ser that is part of the protease active site of the proenzyme becomes the pyruvoyl prosthetic group, which constitutes an essential element of the active site of the mature decarboxylase.</text>
</comment>
<comment type="similarity">
    <text evidence="1">Belongs to the phosphatidylserine decarboxylase family. PSD-B subfamily. Prokaryotic type I sub-subfamily.</text>
</comment>
<gene>
    <name evidence="1" type="primary">psd</name>
    <name type="ordered locus">VC0395_A2741</name>
    <name type="ordered locus">VC395_0382</name>
</gene>
<evidence type="ECO:0000255" key="1">
    <source>
        <dbReference type="HAMAP-Rule" id="MF_00662"/>
    </source>
</evidence>